<dbReference type="EMBL" id="BX936398">
    <property type="protein sequence ID" value="CAH19365.1"/>
    <property type="molecule type" value="Genomic_DNA"/>
</dbReference>
<dbReference type="RefSeq" id="WP_024063655.1">
    <property type="nucleotide sequence ID" value="NC_006155.1"/>
</dbReference>
<dbReference type="SMR" id="Q66G57"/>
<dbReference type="GeneID" id="49787904"/>
<dbReference type="KEGG" id="ypo:BZ17_2471"/>
<dbReference type="KEGG" id="yps:YPTB0125"/>
<dbReference type="PATRIC" id="fig|273123.14.peg.2590"/>
<dbReference type="Proteomes" id="UP000001011">
    <property type="component" value="Chromosome"/>
</dbReference>
<dbReference type="GO" id="GO:0009279">
    <property type="term" value="C:cell outer membrane"/>
    <property type="evidence" value="ECO:0007669"/>
    <property type="project" value="UniProtKB-SubCell"/>
</dbReference>
<dbReference type="GO" id="GO:0046930">
    <property type="term" value="C:pore complex"/>
    <property type="evidence" value="ECO:0007669"/>
    <property type="project" value="UniProtKB-KW"/>
</dbReference>
<dbReference type="GO" id="GO:0015420">
    <property type="term" value="F:ABC-type vitamin B12 transporter activity"/>
    <property type="evidence" value="ECO:0007669"/>
    <property type="project" value="InterPro"/>
</dbReference>
<dbReference type="GO" id="GO:0046872">
    <property type="term" value="F:metal ion binding"/>
    <property type="evidence" value="ECO:0007669"/>
    <property type="project" value="UniProtKB-KW"/>
</dbReference>
<dbReference type="GO" id="GO:0015288">
    <property type="term" value="F:porin activity"/>
    <property type="evidence" value="ECO:0007669"/>
    <property type="project" value="UniProtKB-KW"/>
</dbReference>
<dbReference type="GO" id="GO:0006811">
    <property type="term" value="P:monoatomic ion transport"/>
    <property type="evidence" value="ECO:0007669"/>
    <property type="project" value="UniProtKB-KW"/>
</dbReference>
<dbReference type="CDD" id="cd01347">
    <property type="entry name" value="ligand_gated_channel"/>
    <property type="match status" value="1"/>
</dbReference>
<dbReference type="FunFam" id="2.170.130.10:FF:000002">
    <property type="entry name" value="Vitamin B12 transporter BtuB"/>
    <property type="match status" value="1"/>
</dbReference>
<dbReference type="Gene3D" id="2.40.170.20">
    <property type="entry name" value="TonB-dependent receptor, beta-barrel domain"/>
    <property type="match status" value="1"/>
</dbReference>
<dbReference type="Gene3D" id="2.170.130.10">
    <property type="entry name" value="TonB-dependent receptor, plug domain"/>
    <property type="match status" value="1"/>
</dbReference>
<dbReference type="HAMAP" id="MF_01531">
    <property type="entry name" value="BtuB"/>
    <property type="match status" value="1"/>
</dbReference>
<dbReference type="InterPro" id="IPR010101">
    <property type="entry name" value="B12_transptr_BtuB"/>
</dbReference>
<dbReference type="InterPro" id="IPR012910">
    <property type="entry name" value="Plug_dom"/>
</dbReference>
<dbReference type="InterPro" id="IPR037066">
    <property type="entry name" value="Plug_dom_sf"/>
</dbReference>
<dbReference type="InterPro" id="IPR039426">
    <property type="entry name" value="TonB-dep_rcpt-like"/>
</dbReference>
<dbReference type="InterPro" id="IPR000531">
    <property type="entry name" value="TonB-dep_rcpt_b-brl"/>
</dbReference>
<dbReference type="InterPro" id="IPR036942">
    <property type="entry name" value="TonB_rcpt_b-brl_sf"/>
</dbReference>
<dbReference type="InterPro" id="IPR010917">
    <property type="entry name" value="TonB_rcpt_CS"/>
</dbReference>
<dbReference type="NCBIfam" id="NF007926">
    <property type="entry name" value="PRK10641.1"/>
    <property type="match status" value="1"/>
</dbReference>
<dbReference type="NCBIfam" id="TIGR01779">
    <property type="entry name" value="TonB-B12"/>
    <property type="match status" value="1"/>
</dbReference>
<dbReference type="PANTHER" id="PTHR30069:SF53">
    <property type="entry name" value="COLICIN I RECEPTOR-RELATED"/>
    <property type="match status" value="1"/>
</dbReference>
<dbReference type="PANTHER" id="PTHR30069">
    <property type="entry name" value="TONB-DEPENDENT OUTER MEMBRANE RECEPTOR"/>
    <property type="match status" value="1"/>
</dbReference>
<dbReference type="Pfam" id="PF07715">
    <property type="entry name" value="Plug"/>
    <property type="match status" value="1"/>
</dbReference>
<dbReference type="Pfam" id="PF00593">
    <property type="entry name" value="TonB_dep_Rec_b-barrel"/>
    <property type="match status" value="1"/>
</dbReference>
<dbReference type="SUPFAM" id="SSF56935">
    <property type="entry name" value="Porins"/>
    <property type="match status" value="1"/>
</dbReference>
<dbReference type="PROSITE" id="PS01156">
    <property type="entry name" value="TONB_DEPENDENT_REC_2"/>
    <property type="match status" value="1"/>
</dbReference>
<dbReference type="PROSITE" id="PS52016">
    <property type="entry name" value="TONB_DEPENDENT_REC_3"/>
    <property type="match status" value="1"/>
</dbReference>
<feature type="signal peptide" evidence="1">
    <location>
        <begin position="1"/>
        <end position="21"/>
    </location>
</feature>
<feature type="chain" id="PRO_0000003496" description="Vitamin B12 transporter BtuB">
    <location>
        <begin position="22"/>
        <end position="624"/>
    </location>
</feature>
<feature type="transmembrane region" description="Beta stranded" evidence="1">
    <location>
        <begin position="163"/>
        <end position="170"/>
    </location>
</feature>
<feature type="transmembrane region" description="Beta stranded" evidence="1">
    <location>
        <begin position="174"/>
        <end position="183"/>
    </location>
</feature>
<feature type="transmembrane region" description="Beta stranded" evidence="1">
    <location>
        <begin position="189"/>
        <end position="200"/>
    </location>
</feature>
<feature type="transmembrane region" description="Beta stranded" evidence="1">
    <location>
        <begin position="222"/>
        <end position="232"/>
    </location>
</feature>
<feature type="transmembrane region" description="Beta stranded" evidence="1">
    <location>
        <begin position="237"/>
        <end position="253"/>
    </location>
</feature>
<feature type="transmembrane region" description="Beta stranded" evidence="1">
    <location>
        <begin position="268"/>
        <end position="282"/>
    </location>
</feature>
<feature type="transmembrane region" description="Beta stranded" evidence="1">
    <location>
        <begin position="284"/>
        <end position="301"/>
    </location>
</feature>
<feature type="transmembrane region" description="Beta stranded" evidence="1">
    <location>
        <begin position="314"/>
        <end position="330"/>
    </location>
</feature>
<feature type="transmembrane region" description="Beta stranded" evidence="1">
    <location>
        <begin position="333"/>
        <end position="342"/>
    </location>
</feature>
<feature type="transmembrane region" description="Beta stranded" evidence="1">
    <location>
        <begin position="358"/>
        <end position="374"/>
    </location>
</feature>
<feature type="transmembrane region" description="Beta stranded" evidence="1">
    <location>
        <begin position="376"/>
        <end position="386"/>
    </location>
</feature>
<feature type="transmembrane region" description="Beta stranded" evidence="1">
    <location>
        <begin position="390"/>
        <end position="405"/>
    </location>
</feature>
<feature type="transmembrane region" description="Beta stranded" evidence="1">
    <location>
        <begin position="408"/>
        <end position="422"/>
    </location>
</feature>
<feature type="transmembrane region" description="Beta stranded" evidence="1">
    <location>
        <begin position="440"/>
        <end position="449"/>
    </location>
</feature>
<feature type="transmembrane region" description="Beta stranded" evidence="1">
    <location>
        <begin position="455"/>
        <end position="464"/>
    </location>
</feature>
<feature type="transmembrane region" description="Beta stranded" evidence="1">
    <location>
        <begin position="480"/>
        <end position="498"/>
    </location>
</feature>
<feature type="transmembrane region" description="Beta stranded" evidence="1">
    <location>
        <begin position="502"/>
        <end position="517"/>
    </location>
</feature>
<feature type="transmembrane region" description="Beta stranded" evidence="1">
    <location>
        <begin position="525"/>
        <end position="537"/>
    </location>
</feature>
<feature type="transmembrane region" description="Beta stranded" evidence="1">
    <location>
        <begin position="543"/>
        <end position="557"/>
    </location>
</feature>
<feature type="transmembrane region" description="Beta stranded" evidence="1">
    <location>
        <begin position="568"/>
        <end position="582"/>
    </location>
</feature>
<feature type="transmembrane region" description="Beta stranded" evidence="1">
    <location>
        <begin position="595"/>
        <end position="606"/>
    </location>
</feature>
<feature type="transmembrane region" description="Beta stranded" evidence="1">
    <location>
        <begin position="612"/>
        <end position="624"/>
    </location>
</feature>
<feature type="domain" description="TBDR plug" evidence="2">
    <location>
        <begin position="43"/>
        <end position="157"/>
    </location>
</feature>
<feature type="domain" description="TBDR beta-barrel" evidence="2">
    <location>
        <begin position="160"/>
        <end position="624"/>
    </location>
</feature>
<feature type="short sequence motif" description="TonB box">
    <location>
        <begin position="31"/>
        <end position="38"/>
    </location>
</feature>
<feature type="short sequence motif" description="TonB C-terminal box">
    <location>
        <begin position="607"/>
        <end position="624"/>
    </location>
</feature>
<feature type="binding site" evidence="1">
    <location>
        <position position="88"/>
    </location>
    <ligand>
        <name>cyanocob(III)alamin</name>
        <dbReference type="ChEBI" id="CHEBI:17439"/>
    </ligand>
</feature>
<feature type="binding site" evidence="1">
    <location>
        <position position="90"/>
    </location>
    <ligand>
        <name>cyanocob(III)alamin</name>
        <dbReference type="ChEBI" id="CHEBI:17439"/>
    </ligand>
</feature>
<feature type="binding site" evidence="1">
    <location>
        <position position="97"/>
    </location>
    <ligand>
        <name>cyanocob(III)alamin</name>
        <dbReference type="ChEBI" id="CHEBI:17439"/>
    </ligand>
</feature>
<feature type="binding site" evidence="1">
    <location>
        <begin position="115"/>
        <end position="116"/>
    </location>
    <ligand>
        <name>cyanocob(III)alamin</name>
        <dbReference type="ChEBI" id="CHEBI:17439"/>
    </ligand>
</feature>
<feature type="binding site" evidence="1">
    <location>
        <position position="204"/>
    </location>
    <ligand>
        <name>Ca(2+)</name>
        <dbReference type="ChEBI" id="CHEBI:29108"/>
        <label>1</label>
    </ligand>
</feature>
<feature type="binding site" evidence="1">
    <location>
        <position position="216"/>
    </location>
    <ligand>
        <name>Ca(2+)</name>
        <dbReference type="ChEBI" id="CHEBI:29108"/>
        <label>1</label>
    </ligand>
</feature>
<feature type="binding site" evidence="1">
    <location>
        <position position="218"/>
    </location>
    <ligand>
        <name>Ca(2+)</name>
        <dbReference type="ChEBI" id="CHEBI:29108"/>
        <label>1</label>
    </ligand>
</feature>
<feature type="binding site" evidence="1">
    <location>
        <position position="218"/>
    </location>
    <ligand>
        <name>Ca(2+)</name>
        <dbReference type="ChEBI" id="CHEBI:29108"/>
        <label>2</label>
    </ligand>
</feature>
<feature type="binding site" evidence="1">
    <location>
        <position position="220"/>
    </location>
    <ligand>
        <name>Ca(2+)</name>
        <dbReference type="ChEBI" id="CHEBI:29108"/>
        <label>1</label>
    </ligand>
</feature>
<feature type="binding site" evidence="1">
    <location>
        <position position="220"/>
    </location>
    <ligand>
        <name>Ca(2+)</name>
        <dbReference type="ChEBI" id="CHEBI:29108"/>
        <label>2</label>
    </ligand>
</feature>
<feature type="binding site" evidence="1">
    <location>
        <position position="254"/>
    </location>
    <ligand>
        <name>Ca(2+)</name>
        <dbReference type="ChEBI" id="CHEBI:29108"/>
        <label>2</label>
    </ligand>
</feature>
<feature type="binding site" evidence="1">
    <location>
        <position position="255"/>
    </location>
    <ligand>
        <name>Ca(2+)</name>
        <dbReference type="ChEBI" id="CHEBI:29108"/>
        <label>1</label>
    </ligand>
</feature>
<feature type="binding site" evidence="1">
    <location>
        <position position="255"/>
    </location>
    <ligand>
        <name>Ca(2+)</name>
        <dbReference type="ChEBI" id="CHEBI:29108"/>
        <label>2</label>
    </ligand>
</feature>
<feature type="binding site" evidence="1">
    <location>
        <position position="266"/>
    </location>
    <ligand>
        <name>Ca(2+)</name>
        <dbReference type="ChEBI" id="CHEBI:29108"/>
        <label>2</label>
    </ligand>
</feature>
<feature type="binding site" evidence="1">
    <location>
        <position position="314"/>
    </location>
    <ligand>
        <name>cyanocob(III)alamin</name>
        <dbReference type="ChEBI" id="CHEBI:17439"/>
    </ligand>
</feature>
<feature type="binding site" evidence="1">
    <location>
        <position position="525"/>
    </location>
    <ligand>
        <name>cyanocob(III)alamin</name>
        <dbReference type="ChEBI" id="CHEBI:17439"/>
    </ligand>
</feature>
<accession>Q66G57</accession>
<name>BTUB_YERPS</name>
<evidence type="ECO:0000255" key="1">
    <source>
        <dbReference type="HAMAP-Rule" id="MF_01531"/>
    </source>
</evidence>
<evidence type="ECO:0000255" key="2">
    <source>
        <dbReference type="PROSITE-ProRule" id="PRU01360"/>
    </source>
</evidence>
<comment type="function">
    <text evidence="1">Involved in the active translocation of vitamin B12 (cyanocobalamin) across the outer membrane to the periplasmic space. It derives its energy for transport by interacting with the trans-periplasmic membrane protein TonB.</text>
</comment>
<comment type="subcellular location">
    <subcellularLocation>
        <location evidence="1">Cell outer membrane</location>
        <topology evidence="1">Multi-pass membrane protein</topology>
    </subcellularLocation>
</comment>
<comment type="similarity">
    <text evidence="1">Belongs to the TonB-dependent receptor family. BtuB (TC 1.B.14.3.1) subfamily.</text>
</comment>
<protein>
    <recommendedName>
        <fullName evidence="1">Vitamin B12 transporter BtuB</fullName>
    </recommendedName>
    <alternativeName>
        <fullName evidence="1">Cobalamin receptor</fullName>
    </alternativeName>
    <alternativeName>
        <fullName evidence="1">Outer membrane cobalamin translocator</fullName>
    </alternativeName>
</protein>
<sequence>MTIKKYTLLTALSVTAFSGWAQGNNTTDNNNEMVVTANRFPQPKSSVLAPVDVVTRADIDRWQSTNINDVLRRLPGINIAQYGGPRQLSSLFIRGTNSSHVLVLVDGVRLNQAGISGSSDLSQIPISLVQRIEYIRGPRSAVYGSDAIGGVVNIITERETLGSTLTAGLGSNGYQNYNGSTQQKLGDDTTITLAGNYDYSKGYDVVAKGNTGMASQPDRDGYLGKMLWLGANHKFNEQFSGFVRGYGFDNRSDYDSYYYPGSPLVDTRSLSSRTYDTGINFSNGGYASQLIGSYSRTQDYNYDPSYGRYDQSATLDDISQYNLQWTNTYQLGLGNVGGGLDWQKQTTEPGTNYLSNGYEQRNTGVYGTVQQFVGPVTLEGAIRGDDNSQFGWHTTWQSSAGWEFVDGYRLIGSYGTAFKAPNLGQIYSSTYGNRDLKPEESTQWEAAITGITGPLDWRLSAYRNDIDQMIATRGVYPNSRYYNVEKATIKGVEWTGSFETGPLSHQVTLEYLDPRNADTHEILARRAKQQVKYQLDWQMADLDWSVTYQYIGQRYDSVFDPITYAASPVKLAGISLWDLAVSYPVTSHLTVRGRIANLFDKDYEMVYGYQTPGREYYFTGSYNF</sequence>
<gene>
    <name evidence="1" type="primary">btuB</name>
    <name type="ordered locus">YPTB0125</name>
</gene>
<keyword id="KW-0106">Calcium</keyword>
<keyword id="KW-0998">Cell outer membrane</keyword>
<keyword id="KW-0406">Ion transport</keyword>
<keyword id="KW-0472">Membrane</keyword>
<keyword id="KW-0479">Metal-binding</keyword>
<keyword id="KW-0626">Porin</keyword>
<keyword id="KW-0732">Signal</keyword>
<keyword id="KW-0798">TonB box</keyword>
<keyword id="KW-0812">Transmembrane</keyword>
<keyword id="KW-1134">Transmembrane beta strand</keyword>
<keyword id="KW-0813">Transport</keyword>
<reference key="1">
    <citation type="journal article" date="2004" name="Proc. Natl. Acad. Sci. U.S.A.">
        <title>Insights into the evolution of Yersinia pestis through whole-genome comparison with Yersinia pseudotuberculosis.</title>
        <authorList>
            <person name="Chain P.S.G."/>
            <person name="Carniel E."/>
            <person name="Larimer F.W."/>
            <person name="Lamerdin J."/>
            <person name="Stoutland P.O."/>
            <person name="Regala W.M."/>
            <person name="Georgescu A.M."/>
            <person name="Vergez L.M."/>
            <person name="Land M.L."/>
            <person name="Motin V.L."/>
            <person name="Brubaker R.R."/>
            <person name="Fowler J."/>
            <person name="Hinnebusch J."/>
            <person name="Marceau M."/>
            <person name="Medigue C."/>
            <person name="Simonet M."/>
            <person name="Chenal-Francisque V."/>
            <person name="Souza B."/>
            <person name="Dacheux D."/>
            <person name="Elliott J.M."/>
            <person name="Derbise A."/>
            <person name="Hauser L.J."/>
            <person name="Garcia E."/>
        </authorList>
    </citation>
    <scope>NUCLEOTIDE SEQUENCE [LARGE SCALE GENOMIC DNA]</scope>
    <source>
        <strain>IP32953</strain>
    </source>
</reference>
<proteinExistence type="inferred from homology"/>
<organism>
    <name type="scientific">Yersinia pseudotuberculosis serotype I (strain IP32953)</name>
    <dbReference type="NCBI Taxonomy" id="273123"/>
    <lineage>
        <taxon>Bacteria</taxon>
        <taxon>Pseudomonadati</taxon>
        <taxon>Pseudomonadota</taxon>
        <taxon>Gammaproteobacteria</taxon>
        <taxon>Enterobacterales</taxon>
        <taxon>Yersiniaceae</taxon>
        <taxon>Yersinia</taxon>
    </lineage>
</organism>